<dbReference type="EC" id="2.7.2.3" evidence="1"/>
<dbReference type="EMBL" id="CP001129">
    <property type="protein sequence ID" value="ACG61650.1"/>
    <property type="molecule type" value="Genomic_DNA"/>
</dbReference>
<dbReference type="RefSeq" id="WP_012514931.1">
    <property type="nucleotide sequence ID" value="NC_011134.1"/>
</dbReference>
<dbReference type="SMR" id="B4U0W3"/>
<dbReference type="KEGG" id="sez:Sez_0272"/>
<dbReference type="HOGENOM" id="CLU_025427_0_1_9"/>
<dbReference type="UniPathway" id="UPA00109">
    <property type="reaction ID" value="UER00185"/>
</dbReference>
<dbReference type="Proteomes" id="UP000001873">
    <property type="component" value="Chromosome"/>
</dbReference>
<dbReference type="GO" id="GO:0005829">
    <property type="term" value="C:cytosol"/>
    <property type="evidence" value="ECO:0007669"/>
    <property type="project" value="TreeGrafter"/>
</dbReference>
<dbReference type="GO" id="GO:0043531">
    <property type="term" value="F:ADP binding"/>
    <property type="evidence" value="ECO:0007669"/>
    <property type="project" value="TreeGrafter"/>
</dbReference>
<dbReference type="GO" id="GO:0005524">
    <property type="term" value="F:ATP binding"/>
    <property type="evidence" value="ECO:0007669"/>
    <property type="project" value="UniProtKB-KW"/>
</dbReference>
<dbReference type="GO" id="GO:0004618">
    <property type="term" value="F:phosphoglycerate kinase activity"/>
    <property type="evidence" value="ECO:0007669"/>
    <property type="project" value="UniProtKB-UniRule"/>
</dbReference>
<dbReference type="GO" id="GO:0006094">
    <property type="term" value="P:gluconeogenesis"/>
    <property type="evidence" value="ECO:0007669"/>
    <property type="project" value="TreeGrafter"/>
</dbReference>
<dbReference type="GO" id="GO:0006096">
    <property type="term" value="P:glycolytic process"/>
    <property type="evidence" value="ECO:0007669"/>
    <property type="project" value="UniProtKB-UniRule"/>
</dbReference>
<dbReference type="FunFam" id="3.40.50.1260:FF:000001">
    <property type="entry name" value="Phosphoglycerate kinase"/>
    <property type="match status" value="1"/>
</dbReference>
<dbReference type="FunFam" id="3.40.50.1260:FF:000008">
    <property type="entry name" value="Phosphoglycerate kinase"/>
    <property type="match status" value="1"/>
</dbReference>
<dbReference type="Gene3D" id="3.40.50.1260">
    <property type="entry name" value="Phosphoglycerate kinase, N-terminal domain"/>
    <property type="match status" value="2"/>
</dbReference>
<dbReference type="HAMAP" id="MF_00145">
    <property type="entry name" value="Phosphoglyc_kinase"/>
    <property type="match status" value="1"/>
</dbReference>
<dbReference type="InterPro" id="IPR001576">
    <property type="entry name" value="Phosphoglycerate_kinase"/>
</dbReference>
<dbReference type="InterPro" id="IPR015911">
    <property type="entry name" value="Phosphoglycerate_kinase_CS"/>
</dbReference>
<dbReference type="InterPro" id="IPR015824">
    <property type="entry name" value="Phosphoglycerate_kinase_N"/>
</dbReference>
<dbReference type="InterPro" id="IPR036043">
    <property type="entry name" value="Phosphoglycerate_kinase_sf"/>
</dbReference>
<dbReference type="PANTHER" id="PTHR11406">
    <property type="entry name" value="PHOSPHOGLYCERATE KINASE"/>
    <property type="match status" value="1"/>
</dbReference>
<dbReference type="PANTHER" id="PTHR11406:SF23">
    <property type="entry name" value="PHOSPHOGLYCERATE KINASE 1, CHLOROPLASTIC-RELATED"/>
    <property type="match status" value="1"/>
</dbReference>
<dbReference type="Pfam" id="PF00162">
    <property type="entry name" value="PGK"/>
    <property type="match status" value="1"/>
</dbReference>
<dbReference type="PIRSF" id="PIRSF000724">
    <property type="entry name" value="Pgk"/>
    <property type="match status" value="1"/>
</dbReference>
<dbReference type="PRINTS" id="PR00477">
    <property type="entry name" value="PHGLYCKINASE"/>
</dbReference>
<dbReference type="SUPFAM" id="SSF53748">
    <property type="entry name" value="Phosphoglycerate kinase"/>
    <property type="match status" value="1"/>
</dbReference>
<dbReference type="PROSITE" id="PS00111">
    <property type="entry name" value="PGLYCERATE_KINASE"/>
    <property type="match status" value="1"/>
</dbReference>
<proteinExistence type="inferred from homology"/>
<accession>B4U0W3</accession>
<protein>
    <recommendedName>
        <fullName evidence="1">Phosphoglycerate kinase</fullName>
        <ecNumber evidence="1">2.7.2.3</ecNumber>
    </recommendedName>
</protein>
<reference key="1">
    <citation type="journal article" date="2008" name="PLoS ONE">
        <title>Genome sequence of a lancefield group C Streptococcus zooepidemicus strain causing epidemic nephritis: new information about an old disease.</title>
        <authorList>
            <person name="Beres S.B."/>
            <person name="Sesso R."/>
            <person name="Pinto S.W.L."/>
            <person name="Hoe N.P."/>
            <person name="Porcella S.F."/>
            <person name="Deleo F.R."/>
            <person name="Musser J.M."/>
        </authorList>
    </citation>
    <scope>NUCLEOTIDE SEQUENCE [LARGE SCALE GENOMIC DNA]</scope>
    <source>
        <strain>MGCS10565</strain>
    </source>
</reference>
<keyword id="KW-0067">ATP-binding</keyword>
<keyword id="KW-0963">Cytoplasm</keyword>
<keyword id="KW-0324">Glycolysis</keyword>
<keyword id="KW-0418">Kinase</keyword>
<keyword id="KW-0547">Nucleotide-binding</keyword>
<keyword id="KW-0808">Transferase</keyword>
<gene>
    <name evidence="1" type="primary">pgk</name>
    <name type="ordered locus">Sez_0272</name>
</gene>
<evidence type="ECO:0000255" key="1">
    <source>
        <dbReference type="HAMAP-Rule" id="MF_00145"/>
    </source>
</evidence>
<name>PGK_STREM</name>
<feature type="chain" id="PRO_1000096378" description="Phosphoglycerate kinase">
    <location>
        <begin position="1"/>
        <end position="398"/>
    </location>
</feature>
<feature type="binding site" evidence="1">
    <location>
        <begin position="21"/>
        <end position="23"/>
    </location>
    <ligand>
        <name>substrate</name>
    </ligand>
</feature>
<feature type="binding site" evidence="1">
    <location>
        <position position="36"/>
    </location>
    <ligand>
        <name>substrate</name>
    </ligand>
</feature>
<feature type="binding site" evidence="1">
    <location>
        <begin position="59"/>
        <end position="62"/>
    </location>
    <ligand>
        <name>substrate</name>
    </ligand>
</feature>
<feature type="binding site" evidence="1">
    <location>
        <position position="119"/>
    </location>
    <ligand>
        <name>substrate</name>
    </ligand>
</feature>
<feature type="binding site" evidence="1">
    <location>
        <position position="157"/>
    </location>
    <ligand>
        <name>substrate</name>
    </ligand>
</feature>
<feature type="binding site" evidence="1">
    <location>
        <position position="208"/>
    </location>
    <ligand>
        <name>ATP</name>
        <dbReference type="ChEBI" id="CHEBI:30616"/>
    </ligand>
</feature>
<feature type="binding site" evidence="1">
    <location>
        <position position="296"/>
    </location>
    <ligand>
        <name>ATP</name>
        <dbReference type="ChEBI" id="CHEBI:30616"/>
    </ligand>
</feature>
<feature type="binding site" evidence="1">
    <location>
        <position position="327"/>
    </location>
    <ligand>
        <name>ATP</name>
        <dbReference type="ChEBI" id="CHEBI:30616"/>
    </ligand>
</feature>
<feature type="binding site" evidence="1">
    <location>
        <begin position="354"/>
        <end position="357"/>
    </location>
    <ligand>
        <name>ATP</name>
        <dbReference type="ChEBI" id="CHEBI:30616"/>
    </ligand>
</feature>
<comment type="catalytic activity">
    <reaction evidence="1">
        <text>(2R)-3-phosphoglycerate + ATP = (2R)-3-phospho-glyceroyl phosphate + ADP</text>
        <dbReference type="Rhea" id="RHEA:14801"/>
        <dbReference type="ChEBI" id="CHEBI:30616"/>
        <dbReference type="ChEBI" id="CHEBI:57604"/>
        <dbReference type="ChEBI" id="CHEBI:58272"/>
        <dbReference type="ChEBI" id="CHEBI:456216"/>
        <dbReference type="EC" id="2.7.2.3"/>
    </reaction>
</comment>
<comment type="pathway">
    <text evidence="1">Carbohydrate degradation; glycolysis; pyruvate from D-glyceraldehyde 3-phosphate: step 2/5.</text>
</comment>
<comment type="subunit">
    <text evidence="1">Monomer.</text>
</comment>
<comment type="subcellular location">
    <subcellularLocation>
        <location evidence="1">Cytoplasm</location>
    </subcellularLocation>
</comment>
<comment type="similarity">
    <text evidence="1">Belongs to the phosphoglycerate kinase family.</text>
</comment>
<organism>
    <name type="scientific">Streptococcus equi subsp. zooepidemicus (strain MGCS10565)</name>
    <dbReference type="NCBI Taxonomy" id="552526"/>
    <lineage>
        <taxon>Bacteria</taxon>
        <taxon>Bacillati</taxon>
        <taxon>Bacillota</taxon>
        <taxon>Bacilli</taxon>
        <taxon>Lactobacillales</taxon>
        <taxon>Streptococcaceae</taxon>
        <taxon>Streptococcus</taxon>
    </lineage>
</organism>
<sequence length="398" mass="42240">MAKLTVKDLDLKGKKVLVRVDFNVPLKNGVITNDNRISAALPTIKYIIEHGGRAILFSHLGRVKEEADKEGKSLAPVAKNLAEKLGQEVIFPGSTRGAELEAAIDALEDGQVLLVENTRFEDIDGKKESKNDPELGKYWASLGEGIFVNDAFGTAHRTHASNVGISANVEKAVAGFLLENEIAYIKEAVEAPERPFVAILGGSKVSDKIGVIENLLEKADKVLIGGGMTYTFYKAQGIEIGNSLCEEDKLDVAKSLLEKSNGKLILPVDSKEANAFADYTEVKVTEGEAVDAGFLGLDIGPKSIAKFDEALTGAKTVVWNGPMGVFENPDFQEGTIGVMDAIVKQPGVKSIIGGGDSAAAAINLGRADKFSWISTGGGASMELLEGKELPGLAALTEK</sequence>